<reference key="1">
    <citation type="journal article" date="1990" name="Proc. Natl. Acad. Sci. U.S.A.">
        <title>rbcL sequence divergence and phylogenetic relationships in Saxifragaceae sensu lato.</title>
        <authorList>
            <person name="Soltis D.E."/>
            <person name="Soltis P.S."/>
            <person name="Clegg M.T."/>
            <person name="Durbin M."/>
        </authorList>
    </citation>
    <scope>NUCLEOTIDE SEQUENCE [GENOMIC DNA]</scope>
</reference>
<reference key="2">
    <citation type="journal article" date="1992" name="Science">
        <title>Carnivorous plants: phylogeny and structural evolution.</title>
        <authorList>
            <person name="Albert V.A."/>
            <person name="Williams S.E."/>
            <person name="Chase M.W."/>
        </authorList>
    </citation>
    <scope>NUCLEOTIDE SEQUENCE [GENOMIC DNA]</scope>
</reference>
<geneLocation type="chloroplast"/>
<gene>
    <name evidence="1" type="primary">rbcL</name>
</gene>
<accession>P28423</accession>
<organism>
    <name type="scientific">Heuchera micrantha</name>
    <name type="common">Alum root</name>
    <dbReference type="NCBI Taxonomy" id="3795"/>
    <lineage>
        <taxon>Eukaryota</taxon>
        <taxon>Viridiplantae</taxon>
        <taxon>Streptophyta</taxon>
        <taxon>Embryophyta</taxon>
        <taxon>Tracheophyta</taxon>
        <taxon>Spermatophyta</taxon>
        <taxon>Magnoliopsida</taxon>
        <taxon>eudicotyledons</taxon>
        <taxon>Gunneridae</taxon>
        <taxon>Pentapetalae</taxon>
        <taxon>Saxifragales</taxon>
        <taxon>Saxifragaceae</taxon>
        <taxon>Heuchereae</taxon>
        <taxon>Heuchera</taxon>
    </lineage>
</organism>
<dbReference type="EC" id="4.1.1.39" evidence="1"/>
<dbReference type="EMBL" id="L01925">
    <property type="protein sequence ID" value="AAA84321.2"/>
    <property type="molecule type" value="Genomic_DNA"/>
</dbReference>
<dbReference type="SMR" id="P28423"/>
<dbReference type="GO" id="GO:0009507">
    <property type="term" value="C:chloroplast"/>
    <property type="evidence" value="ECO:0007669"/>
    <property type="project" value="UniProtKB-SubCell"/>
</dbReference>
<dbReference type="GO" id="GO:0000287">
    <property type="term" value="F:magnesium ion binding"/>
    <property type="evidence" value="ECO:0007669"/>
    <property type="project" value="InterPro"/>
</dbReference>
<dbReference type="GO" id="GO:0004497">
    <property type="term" value="F:monooxygenase activity"/>
    <property type="evidence" value="ECO:0007669"/>
    <property type="project" value="UniProtKB-KW"/>
</dbReference>
<dbReference type="GO" id="GO:0016984">
    <property type="term" value="F:ribulose-bisphosphate carboxylase activity"/>
    <property type="evidence" value="ECO:0007669"/>
    <property type="project" value="UniProtKB-EC"/>
</dbReference>
<dbReference type="GO" id="GO:0009853">
    <property type="term" value="P:photorespiration"/>
    <property type="evidence" value="ECO:0007669"/>
    <property type="project" value="UniProtKB-KW"/>
</dbReference>
<dbReference type="GO" id="GO:0019253">
    <property type="term" value="P:reductive pentose-phosphate cycle"/>
    <property type="evidence" value="ECO:0007669"/>
    <property type="project" value="UniProtKB-KW"/>
</dbReference>
<dbReference type="CDD" id="cd08212">
    <property type="entry name" value="RuBisCO_large_I"/>
    <property type="match status" value="1"/>
</dbReference>
<dbReference type="FunFam" id="3.20.20.110:FF:000001">
    <property type="entry name" value="Ribulose bisphosphate carboxylase large chain"/>
    <property type="match status" value="1"/>
</dbReference>
<dbReference type="FunFam" id="3.30.70.150:FF:000001">
    <property type="entry name" value="Ribulose bisphosphate carboxylase large chain"/>
    <property type="match status" value="1"/>
</dbReference>
<dbReference type="Gene3D" id="3.20.20.110">
    <property type="entry name" value="Ribulose bisphosphate carboxylase, large subunit, C-terminal domain"/>
    <property type="match status" value="1"/>
</dbReference>
<dbReference type="Gene3D" id="3.30.70.150">
    <property type="entry name" value="RuBisCO large subunit, N-terminal domain"/>
    <property type="match status" value="1"/>
</dbReference>
<dbReference type="HAMAP" id="MF_01338">
    <property type="entry name" value="RuBisCO_L_type1"/>
    <property type="match status" value="1"/>
</dbReference>
<dbReference type="InterPro" id="IPR033966">
    <property type="entry name" value="RuBisCO"/>
</dbReference>
<dbReference type="InterPro" id="IPR020878">
    <property type="entry name" value="RuBisCo_large_chain_AS"/>
</dbReference>
<dbReference type="InterPro" id="IPR000685">
    <property type="entry name" value="RuBisCO_lsu_C"/>
</dbReference>
<dbReference type="InterPro" id="IPR036376">
    <property type="entry name" value="RuBisCO_lsu_C_sf"/>
</dbReference>
<dbReference type="InterPro" id="IPR017443">
    <property type="entry name" value="RuBisCO_lsu_fd_N"/>
</dbReference>
<dbReference type="InterPro" id="IPR036422">
    <property type="entry name" value="RuBisCO_lsu_N_sf"/>
</dbReference>
<dbReference type="InterPro" id="IPR020888">
    <property type="entry name" value="RuBisCO_lsuI"/>
</dbReference>
<dbReference type="NCBIfam" id="NF003252">
    <property type="entry name" value="PRK04208.1"/>
    <property type="match status" value="1"/>
</dbReference>
<dbReference type="PANTHER" id="PTHR42704">
    <property type="entry name" value="RIBULOSE BISPHOSPHATE CARBOXYLASE"/>
    <property type="match status" value="1"/>
</dbReference>
<dbReference type="PANTHER" id="PTHR42704:SF15">
    <property type="entry name" value="RIBULOSE BISPHOSPHATE CARBOXYLASE LARGE CHAIN"/>
    <property type="match status" value="1"/>
</dbReference>
<dbReference type="Pfam" id="PF00016">
    <property type="entry name" value="RuBisCO_large"/>
    <property type="match status" value="1"/>
</dbReference>
<dbReference type="Pfam" id="PF02788">
    <property type="entry name" value="RuBisCO_large_N"/>
    <property type="match status" value="1"/>
</dbReference>
<dbReference type="SFLD" id="SFLDG01052">
    <property type="entry name" value="RuBisCO"/>
    <property type="match status" value="1"/>
</dbReference>
<dbReference type="SFLD" id="SFLDS00014">
    <property type="entry name" value="RuBisCO"/>
    <property type="match status" value="1"/>
</dbReference>
<dbReference type="SFLD" id="SFLDG00301">
    <property type="entry name" value="RuBisCO-like_proteins"/>
    <property type="match status" value="1"/>
</dbReference>
<dbReference type="SUPFAM" id="SSF51649">
    <property type="entry name" value="RuBisCo, C-terminal domain"/>
    <property type="match status" value="1"/>
</dbReference>
<dbReference type="SUPFAM" id="SSF54966">
    <property type="entry name" value="RuBisCO, large subunit, small (N-terminal) domain"/>
    <property type="match status" value="1"/>
</dbReference>
<dbReference type="PROSITE" id="PS00157">
    <property type="entry name" value="RUBISCO_LARGE"/>
    <property type="match status" value="1"/>
</dbReference>
<comment type="function">
    <text evidence="1">RuBisCO catalyzes two reactions: the carboxylation of D-ribulose 1,5-bisphosphate, the primary event in carbon dioxide fixation, as well as the oxidative fragmentation of the pentose substrate in the photorespiration process. Both reactions occur simultaneously and in competition at the same active site.</text>
</comment>
<comment type="catalytic activity">
    <reaction evidence="1">
        <text>2 (2R)-3-phosphoglycerate + 2 H(+) = D-ribulose 1,5-bisphosphate + CO2 + H2O</text>
        <dbReference type="Rhea" id="RHEA:23124"/>
        <dbReference type="ChEBI" id="CHEBI:15377"/>
        <dbReference type="ChEBI" id="CHEBI:15378"/>
        <dbReference type="ChEBI" id="CHEBI:16526"/>
        <dbReference type="ChEBI" id="CHEBI:57870"/>
        <dbReference type="ChEBI" id="CHEBI:58272"/>
        <dbReference type="EC" id="4.1.1.39"/>
    </reaction>
</comment>
<comment type="catalytic activity">
    <reaction evidence="1">
        <text>D-ribulose 1,5-bisphosphate + O2 = 2-phosphoglycolate + (2R)-3-phosphoglycerate + 2 H(+)</text>
        <dbReference type="Rhea" id="RHEA:36631"/>
        <dbReference type="ChEBI" id="CHEBI:15378"/>
        <dbReference type="ChEBI" id="CHEBI:15379"/>
        <dbReference type="ChEBI" id="CHEBI:57870"/>
        <dbReference type="ChEBI" id="CHEBI:58033"/>
        <dbReference type="ChEBI" id="CHEBI:58272"/>
    </reaction>
</comment>
<comment type="cofactor">
    <cofactor evidence="1">
        <name>Mg(2+)</name>
        <dbReference type="ChEBI" id="CHEBI:18420"/>
    </cofactor>
    <text evidence="1">Binds 1 Mg(2+) ion per subunit.</text>
</comment>
<comment type="subunit">
    <text evidence="1">Heterohexadecamer of 8 large chains and 8 small chains; disulfide-linked. The disulfide link is formed within the large subunit homodimers.</text>
</comment>
<comment type="subcellular location">
    <subcellularLocation>
        <location>Plastid</location>
        <location>Chloroplast</location>
    </subcellularLocation>
</comment>
<comment type="PTM">
    <text evidence="1">The disulfide bond which can form in the large chain dimeric partners within the hexadecamer appears to be associated with oxidative stress and protein turnover.</text>
</comment>
<comment type="miscellaneous">
    <text evidence="1">The basic functional RuBisCO is composed of a large chain homodimer in a 'head-to-tail' conformation. In form I RuBisCO this homodimer is arranged in a barrel-like tetramer with the small subunits forming a tetrameric 'cap' on each end of the 'barrel'.</text>
</comment>
<comment type="similarity">
    <text evidence="1">Belongs to the RuBisCO large chain family. Type I subfamily.</text>
</comment>
<keyword id="KW-0113">Calvin cycle</keyword>
<keyword id="KW-0120">Carbon dioxide fixation</keyword>
<keyword id="KW-0150">Chloroplast</keyword>
<keyword id="KW-1015">Disulfide bond</keyword>
<keyword id="KW-0456">Lyase</keyword>
<keyword id="KW-0460">Magnesium</keyword>
<keyword id="KW-0479">Metal-binding</keyword>
<keyword id="KW-0488">Methylation</keyword>
<keyword id="KW-0503">Monooxygenase</keyword>
<keyword id="KW-0560">Oxidoreductase</keyword>
<keyword id="KW-0601">Photorespiration</keyword>
<keyword id="KW-0602">Photosynthesis</keyword>
<keyword id="KW-0934">Plastid</keyword>
<name>RBL_HEUMI</name>
<feature type="chain" id="PRO_0000062492" description="Ribulose bisphosphate carboxylase large chain">
    <location>
        <begin position="1" status="less than"/>
        <end position="459" status="greater than"/>
    </location>
</feature>
<feature type="active site" description="Proton acceptor" evidence="1">
    <location>
        <position position="165"/>
    </location>
</feature>
<feature type="active site" description="Proton acceptor" evidence="1">
    <location>
        <position position="284"/>
    </location>
</feature>
<feature type="binding site" description="in homodimeric partner" evidence="1">
    <location>
        <position position="113"/>
    </location>
    <ligand>
        <name>substrate</name>
    </ligand>
</feature>
<feature type="binding site" evidence="1">
    <location>
        <position position="163"/>
    </location>
    <ligand>
        <name>substrate</name>
    </ligand>
</feature>
<feature type="binding site" evidence="1">
    <location>
        <position position="167"/>
    </location>
    <ligand>
        <name>substrate</name>
    </ligand>
</feature>
<feature type="binding site" description="via carbamate group" evidence="1">
    <location>
        <position position="191"/>
    </location>
    <ligand>
        <name>Mg(2+)</name>
        <dbReference type="ChEBI" id="CHEBI:18420"/>
    </ligand>
</feature>
<feature type="binding site" evidence="1">
    <location>
        <position position="193"/>
    </location>
    <ligand>
        <name>Mg(2+)</name>
        <dbReference type="ChEBI" id="CHEBI:18420"/>
    </ligand>
</feature>
<feature type="binding site" evidence="1">
    <location>
        <position position="194"/>
    </location>
    <ligand>
        <name>Mg(2+)</name>
        <dbReference type="ChEBI" id="CHEBI:18420"/>
    </ligand>
</feature>
<feature type="binding site" evidence="1">
    <location>
        <position position="285"/>
    </location>
    <ligand>
        <name>substrate</name>
    </ligand>
</feature>
<feature type="binding site" evidence="1">
    <location>
        <position position="317"/>
    </location>
    <ligand>
        <name>substrate</name>
    </ligand>
</feature>
<feature type="binding site" evidence="1">
    <location>
        <position position="369"/>
    </location>
    <ligand>
        <name>substrate</name>
    </ligand>
</feature>
<feature type="site" description="Transition state stabilizer" evidence="1">
    <location>
        <position position="324"/>
    </location>
</feature>
<feature type="modified residue" description="N6,N6,N6-trimethyllysine" evidence="1">
    <location>
        <position position="4"/>
    </location>
</feature>
<feature type="modified residue" description="N6-carboxylysine" evidence="1">
    <location>
        <position position="191"/>
    </location>
</feature>
<feature type="disulfide bond" description="Interchain; in linked form" evidence="1">
    <location>
        <position position="237"/>
    </location>
</feature>
<feature type="non-terminal residue">
    <location>
        <position position="1"/>
    </location>
</feature>
<feature type="non-terminal residue">
    <location>
        <position position="459"/>
    </location>
</feature>
<proteinExistence type="inferred from homology"/>
<sequence>VGFKAGVKDYKLTYYTPDYETKDTDILAAFRVTPQPGVPPEEAGAAVAAESSTGTWTTVWTDGLTNLDRYKGRCYHIEPVAGEESQFIAYVAYPLDLFEEGSVTNMFTSIVGNVFGFKALRALRLEDLRIPVAYVKTFQGPPHGIQVERDKLNKYGRPLLGCTIKPKLGLSAKNYGRAVYECLRGGLDFTKDDENVNSQPFMRWRDRFLFCAEALYKAQAETGEIKGHYLNATAGTCEEMLKRAVFARELGVPIVMHDYLTGGFTANTSLAFYCRDNGLLLHIHRAMHAVIDRQKNHGIHFRVLAKALRMSGGDHIHSGTVVGKLEGEREITLGFVDLLRDDFIEKDRSRGIYFTQDWVSLPGVLPVASGGIHVWHMPALTEIFGDDSVLQFGGGTLGHPWGNAPGAVANRVALEACVQARNEGRDLAREGNEIIREACKWSPELAAACEVWKEIKFEF</sequence>
<evidence type="ECO:0000255" key="1">
    <source>
        <dbReference type="HAMAP-Rule" id="MF_01338"/>
    </source>
</evidence>
<protein>
    <recommendedName>
        <fullName evidence="1">Ribulose bisphosphate carboxylase large chain</fullName>
        <shortName evidence="1">RuBisCO large subunit</shortName>
        <ecNumber evidence="1">4.1.1.39</ecNumber>
    </recommendedName>
</protein>